<accession>Q6FJ45</accession>
<comment type="subcellular location">
    <subcellularLocation>
        <location evidence="1">Mitochondrion</location>
    </subcellularLocation>
</comment>
<comment type="similarity">
    <text evidence="3">Belongs to the AIM24 family.</text>
</comment>
<proteinExistence type="inferred from homology"/>
<reference key="1">
    <citation type="journal article" date="2004" name="Nature">
        <title>Genome evolution in yeasts.</title>
        <authorList>
            <person name="Dujon B."/>
            <person name="Sherman D."/>
            <person name="Fischer G."/>
            <person name="Durrens P."/>
            <person name="Casaregola S."/>
            <person name="Lafontaine I."/>
            <person name="de Montigny J."/>
            <person name="Marck C."/>
            <person name="Neuveglise C."/>
            <person name="Talla E."/>
            <person name="Goffard N."/>
            <person name="Frangeul L."/>
            <person name="Aigle M."/>
            <person name="Anthouard V."/>
            <person name="Babour A."/>
            <person name="Barbe V."/>
            <person name="Barnay S."/>
            <person name="Blanchin S."/>
            <person name="Beckerich J.-M."/>
            <person name="Beyne E."/>
            <person name="Bleykasten C."/>
            <person name="Boisrame A."/>
            <person name="Boyer J."/>
            <person name="Cattolico L."/>
            <person name="Confanioleri F."/>
            <person name="de Daruvar A."/>
            <person name="Despons L."/>
            <person name="Fabre E."/>
            <person name="Fairhead C."/>
            <person name="Ferry-Dumazet H."/>
            <person name="Groppi A."/>
            <person name="Hantraye F."/>
            <person name="Hennequin C."/>
            <person name="Jauniaux N."/>
            <person name="Joyet P."/>
            <person name="Kachouri R."/>
            <person name="Kerrest A."/>
            <person name="Koszul R."/>
            <person name="Lemaire M."/>
            <person name="Lesur I."/>
            <person name="Ma L."/>
            <person name="Muller H."/>
            <person name="Nicaud J.-M."/>
            <person name="Nikolski M."/>
            <person name="Oztas S."/>
            <person name="Ozier-Kalogeropoulos O."/>
            <person name="Pellenz S."/>
            <person name="Potier S."/>
            <person name="Richard G.-F."/>
            <person name="Straub M.-L."/>
            <person name="Suleau A."/>
            <person name="Swennen D."/>
            <person name="Tekaia F."/>
            <person name="Wesolowski-Louvel M."/>
            <person name="Westhof E."/>
            <person name="Wirth B."/>
            <person name="Zeniou-Meyer M."/>
            <person name="Zivanovic Y."/>
            <person name="Bolotin-Fukuhara M."/>
            <person name="Thierry A."/>
            <person name="Bouchier C."/>
            <person name="Caudron B."/>
            <person name="Scarpelli C."/>
            <person name="Gaillardin C."/>
            <person name="Weissenbach J."/>
            <person name="Wincker P."/>
            <person name="Souciet J.-L."/>
        </authorList>
    </citation>
    <scope>NUCLEOTIDE SEQUENCE [LARGE SCALE GENOMIC DNA]</scope>
    <source>
        <strain>ATCC 2001 / BCRC 20586 / JCM 3761 / NBRC 0622 / NRRL Y-65 / CBS 138</strain>
    </source>
</reference>
<organism>
    <name type="scientific">Candida glabrata (strain ATCC 2001 / BCRC 20586 / JCM 3761 / NBRC 0622 / NRRL Y-65 / CBS 138)</name>
    <name type="common">Yeast</name>
    <name type="synonym">Nakaseomyces glabratus</name>
    <dbReference type="NCBI Taxonomy" id="284593"/>
    <lineage>
        <taxon>Eukaryota</taxon>
        <taxon>Fungi</taxon>
        <taxon>Dikarya</taxon>
        <taxon>Ascomycota</taxon>
        <taxon>Saccharomycotina</taxon>
        <taxon>Saccharomycetes</taxon>
        <taxon>Saccharomycetales</taxon>
        <taxon>Saccharomycetaceae</taxon>
        <taxon>Nakaseomyces</taxon>
    </lineage>
</organism>
<name>AIM24_CANGA</name>
<evidence type="ECO:0000250" key="1"/>
<evidence type="ECO:0000255" key="2"/>
<evidence type="ECO:0000305" key="3"/>
<dbReference type="EMBL" id="CR380959">
    <property type="protein sequence ID" value="CAG62727.1"/>
    <property type="molecule type" value="Genomic_DNA"/>
</dbReference>
<dbReference type="RefSeq" id="XP_449749.1">
    <property type="nucleotide sequence ID" value="XM_449749.1"/>
</dbReference>
<dbReference type="FunCoup" id="Q6FJ45">
    <property type="interactions" value="18"/>
</dbReference>
<dbReference type="EnsemblFungi" id="CAGL0M09317g-T">
    <property type="protein sequence ID" value="CAGL0M09317g-T-p1"/>
    <property type="gene ID" value="CAGL0M09317g"/>
</dbReference>
<dbReference type="KEGG" id="cgr:2891313"/>
<dbReference type="VEuPathDB" id="FungiDB:CAGL0M09317g"/>
<dbReference type="eggNOG" id="ENOG502RXC5">
    <property type="taxonomic scope" value="Eukaryota"/>
</dbReference>
<dbReference type="HOGENOM" id="CLU_057912_0_0_1"/>
<dbReference type="InParanoid" id="Q6FJ45"/>
<dbReference type="OMA" id="TINGPRT"/>
<dbReference type="Proteomes" id="UP000002428">
    <property type="component" value="Chromosome M"/>
</dbReference>
<dbReference type="GO" id="GO:0005743">
    <property type="term" value="C:mitochondrial inner membrane"/>
    <property type="evidence" value="ECO:0007669"/>
    <property type="project" value="EnsemblFungi"/>
</dbReference>
<dbReference type="GO" id="GO:0007007">
    <property type="term" value="P:inner mitochondrial membrane organization"/>
    <property type="evidence" value="ECO:0007669"/>
    <property type="project" value="EnsemblFungi"/>
</dbReference>
<dbReference type="Gene3D" id="3.60.160.10">
    <property type="entry name" value="Mitochondrial biogenesis AIM24"/>
    <property type="match status" value="1"/>
</dbReference>
<dbReference type="InterPro" id="IPR002838">
    <property type="entry name" value="AIM24"/>
</dbReference>
<dbReference type="InterPro" id="IPR036983">
    <property type="entry name" value="AIM24_sf"/>
</dbReference>
<dbReference type="InterPro" id="IPR016031">
    <property type="entry name" value="Trp_RNA-bd_attenuator-like_dom"/>
</dbReference>
<dbReference type="PANTHER" id="PTHR36959">
    <property type="entry name" value="ALTERED INHERITANCE OF MITOCHONDRIA PROTEIN 24, MITOCHONDRIAL"/>
    <property type="match status" value="1"/>
</dbReference>
<dbReference type="PANTHER" id="PTHR36959:SF2">
    <property type="entry name" value="ALTERED INHERITANCE OF MITOCHONDRIA PROTEIN 24, MITOCHONDRIAL"/>
    <property type="match status" value="1"/>
</dbReference>
<dbReference type="Pfam" id="PF01987">
    <property type="entry name" value="AIM24"/>
    <property type="match status" value="1"/>
</dbReference>
<dbReference type="SUPFAM" id="SSF51219">
    <property type="entry name" value="TRAP-like"/>
    <property type="match status" value="1"/>
</dbReference>
<sequence length="387" mass="42521">MLKSRFKVVGKEALMASLPLEPSVPMCIRKGCLVSVMAGGAHGSGKTASLVIGHKWVNFWTNLARFRSWNSSLYHVLTTSGKENRALVAPNISRGSPWLSALKLVVSILSKNSKGITITDPQRSIYPLELDGTQDWNVWGRDSLIAFEQNDSLDIKPASLSSSLKRDALFSHSHKYQVVTGRGSVLLGGYGDIYSIDLKNSTDDIVINAQNILAVSGKGQTETMNAIENNPFIISHTAASNIPEFTSNVQELAAFEDPKQQQSQTIVQKTVKEAARASKAVWHWISYVYKKTVIFSNNNGHNITSPAFVKIKGPRTIIIQTSHETTQPVSVSTVDILPRTVENAIPEVVETPKAKSDSYINYATVQPDGNVTFRSVSNFNETIAERY</sequence>
<keyword id="KW-0496">Mitochondrion</keyword>
<keyword id="KW-1185">Reference proteome</keyword>
<keyword id="KW-0809">Transit peptide</keyword>
<gene>
    <name type="primary">AIM24</name>
    <name type="ordered locus">CAGL0M09317g</name>
</gene>
<feature type="transit peptide" description="Mitochondrion" evidence="2">
    <location>
        <begin position="1"/>
        <end status="unknown"/>
    </location>
</feature>
<feature type="chain" id="PRO_0000399573" description="Altered inheritance of mitochondria protein 24, mitochondrial">
    <location>
        <begin status="unknown"/>
        <end position="387"/>
    </location>
</feature>
<protein>
    <recommendedName>
        <fullName>Altered inheritance of mitochondria protein 24, mitochondrial</fullName>
    </recommendedName>
</protein>